<protein>
    <recommendedName>
        <fullName>Annexin A1 isoform p37</fullName>
    </recommendedName>
    <alternativeName>
        <fullName>Annexin I isoform p37</fullName>
    </alternativeName>
    <alternativeName>
        <fullName>Calpactin II</fullName>
    </alternativeName>
    <alternativeName>
        <fullName>Calpactin-2</fullName>
    </alternativeName>
    <alternativeName>
        <fullName>Chromobindin-9</fullName>
    </alternativeName>
    <alternativeName>
        <fullName>Lipocortin I</fullName>
    </alternativeName>
    <alternativeName>
        <fullName>Phospholipase A2 inhibitory protein</fullName>
    </alternativeName>
</protein>
<proteinExistence type="evidence at protein level"/>
<sequence>MAMVSEFLKQAWFMEHQEQEYIKSVKGGPVVPQQQPNFDPSADVVALEKAMTAKGVDEATIIDIMTKRTNAQRHRIKAAYQKAKGKSLEEAMKRVLKSHLEDVVVALLKTPAQFDAEELRACMKGLGTDEDTLIEILASRSNKEIREASRYYKEVLKRDLTQDIISDTSGHFQKALVVLAKGDRCEDPHVNDDLADNDARALYEAGEQKKGTDVNVFVTVLTARSYPHLRRVFQKYTKYSKHDMNKVVDMELKGDIEKCLTALVKCATSKPAFFAEKLHLAMKGFGTRHKDLIRIMVSRHEVDMNEIKCYYKKMYGISLCQAIMDDLKGDYETILVALCGSDN</sequence>
<accession>Q92040</accession>
<accession>Q92041</accession>
<organism>
    <name type="scientific">Columba livia</name>
    <name type="common">Rock dove</name>
    <dbReference type="NCBI Taxonomy" id="8932"/>
    <lineage>
        <taxon>Eukaryota</taxon>
        <taxon>Metazoa</taxon>
        <taxon>Chordata</taxon>
        <taxon>Craniata</taxon>
        <taxon>Vertebrata</taxon>
        <taxon>Euteleostomi</taxon>
        <taxon>Archelosauria</taxon>
        <taxon>Archosauria</taxon>
        <taxon>Dinosauria</taxon>
        <taxon>Saurischia</taxon>
        <taxon>Theropoda</taxon>
        <taxon>Coelurosauria</taxon>
        <taxon>Aves</taxon>
        <taxon>Neognathae</taxon>
        <taxon>Neoaves</taxon>
        <taxon>Columbimorphae</taxon>
        <taxon>Columbiformes</taxon>
        <taxon>Columbidae</taxon>
        <taxon>Columba</taxon>
    </lineage>
</organism>
<name>ANX12_COLLI</name>
<reference key="1">
    <citation type="journal article" date="1992" name="J. Biol. Chem.">
        <title>Identification and characterization of columbid annexin Icp37. Insights into the evolution of annexin I phosphorylation sites.</title>
        <authorList>
            <person name="Haigler H.T."/>
            <person name="Mangili J.A."/>
            <person name="Gao Y."/>
            <person name="Jones J."/>
            <person name="Horseman N.D."/>
        </authorList>
    </citation>
    <scope>NUCLEOTIDE SEQUENCE [MRNA]</scope>
    <scope>PROTEIN SEQUENCE OF 13-50</scope>
    <scope>PHOSPHORYLATION AT TYR-21 AND SER-24</scope>
    <source>
        <strain>White Carneau</strain>
        <tissue>Cropsac</tissue>
    </source>
</reference>
<reference key="2">
    <citation type="journal article" date="1994" name="Gene">
        <title>Structural and functional divergences of the columbid annexin I-encoding cp37 and cp35 genes.</title>
        <authorList>
            <person name="Gao Y."/>
            <person name="Horseman N.D."/>
        </authorList>
    </citation>
    <scope>NUCLEOTIDE SEQUENCE [GENOMIC DNA] OF 1-154</scope>
    <source>
        <strain>N41</strain>
        <tissue>Liver</tissue>
    </source>
</reference>
<comment type="function">
    <text>Calcium/phospholipid-binding protein which promotes membrane fusion and is involved in exocytosis. This protein regulates phospholipase A2 activity. It seems to bind from two to four calcium ions with high affinity.</text>
</comment>
<comment type="subcellular location">
    <subcellularLocation>
        <location evidence="1">Nucleus</location>
    </subcellularLocation>
    <subcellularLocation>
        <location evidence="1">Cytoplasm</location>
    </subcellularLocation>
    <subcellularLocation>
        <location evidence="1">Cell projection</location>
        <location evidence="1">Cilium</location>
    </subcellularLocation>
    <subcellularLocation>
        <location evidence="1">Basolateral cell membrane</location>
    </subcellularLocation>
    <text evidence="1">Found in the cilium, nucleus and basolateral cell membrane of ciliated cells in the tracheal endothelium. Found in the cytoplasm of type II pneumocytes and alveolar macrophages.</text>
</comment>
<comment type="domain">
    <text>A pair of annexin repeats may form one binding site for calcium and phospholipid.</text>
</comment>
<comment type="PTM">
    <text evidence="3">Phosphorylated by protein kinase C and epidermal growth factor receptor/kinase.</text>
</comment>
<comment type="PTM">
    <text>The N-terminus is blocked.</text>
</comment>
<comment type="miscellaneous">
    <text>In pigeons, two isoforms of annexin-I are encoded by the differentially regulated genes CP35 and CP37.</text>
</comment>
<comment type="similarity">
    <text evidence="2 4">Belongs to the annexin family.</text>
</comment>
<comment type="sequence caution" evidence="4">
    <conflict type="erroneous initiation">
        <sequence resource="EMBL-CDS" id="AAA49447"/>
    </conflict>
</comment>
<keyword id="KW-0041">Annexin</keyword>
<keyword id="KW-0106">Calcium</keyword>
<keyword id="KW-0111">Calcium/phospholipid-binding</keyword>
<keyword id="KW-1003">Cell membrane</keyword>
<keyword id="KW-0966">Cell projection</keyword>
<keyword id="KW-0969">Cilium</keyword>
<keyword id="KW-0963">Cytoplasm</keyword>
<keyword id="KW-0903">Direct protein sequencing</keyword>
<keyword id="KW-1017">Isopeptide bond</keyword>
<keyword id="KW-0472">Membrane</keyword>
<keyword id="KW-0539">Nucleus</keyword>
<keyword id="KW-0593">Phospholipase A2 inhibitor</keyword>
<keyword id="KW-0597">Phosphoprotein</keyword>
<keyword id="KW-0677">Repeat</keyword>
<dbReference type="EMBL" id="M91008">
    <property type="protein sequence ID" value="AAA49447.1"/>
    <property type="status" value="ALT_INIT"/>
    <property type="molecule type" value="mRNA"/>
</dbReference>
<dbReference type="EMBL" id="L02504">
    <property type="protein sequence ID" value="AAA20674.1"/>
    <property type="molecule type" value="Genomic_DNA"/>
</dbReference>
<dbReference type="PIR" id="A44118">
    <property type="entry name" value="A44118"/>
</dbReference>
<dbReference type="RefSeq" id="NP_001269749.1">
    <property type="nucleotide sequence ID" value="NM_001282820.1"/>
</dbReference>
<dbReference type="SMR" id="Q92040"/>
<dbReference type="iPTMnet" id="Q92040"/>
<dbReference type="GeneID" id="102093126"/>
<dbReference type="KEGG" id="clv:102093126"/>
<dbReference type="eggNOG" id="KOG0819">
    <property type="taxonomic scope" value="Eukaryota"/>
</dbReference>
<dbReference type="OrthoDB" id="237830at8782"/>
<dbReference type="GO" id="GO:0016323">
    <property type="term" value="C:basolateral plasma membrane"/>
    <property type="evidence" value="ECO:0007669"/>
    <property type="project" value="UniProtKB-SubCell"/>
</dbReference>
<dbReference type="GO" id="GO:0005929">
    <property type="term" value="C:cilium"/>
    <property type="evidence" value="ECO:0007669"/>
    <property type="project" value="UniProtKB-SubCell"/>
</dbReference>
<dbReference type="GO" id="GO:0005737">
    <property type="term" value="C:cytoplasm"/>
    <property type="evidence" value="ECO:0007669"/>
    <property type="project" value="UniProtKB-SubCell"/>
</dbReference>
<dbReference type="GO" id="GO:0005634">
    <property type="term" value="C:nucleus"/>
    <property type="evidence" value="ECO:0007669"/>
    <property type="project" value="UniProtKB-SubCell"/>
</dbReference>
<dbReference type="GO" id="GO:0012506">
    <property type="term" value="C:vesicle membrane"/>
    <property type="evidence" value="ECO:0007669"/>
    <property type="project" value="TreeGrafter"/>
</dbReference>
<dbReference type="GO" id="GO:0005509">
    <property type="term" value="F:calcium ion binding"/>
    <property type="evidence" value="ECO:0007669"/>
    <property type="project" value="InterPro"/>
</dbReference>
<dbReference type="GO" id="GO:0005544">
    <property type="term" value="F:calcium-dependent phospholipid binding"/>
    <property type="evidence" value="ECO:0007669"/>
    <property type="project" value="UniProtKB-KW"/>
</dbReference>
<dbReference type="GO" id="GO:0001786">
    <property type="term" value="F:phosphatidylserine binding"/>
    <property type="evidence" value="ECO:0007669"/>
    <property type="project" value="TreeGrafter"/>
</dbReference>
<dbReference type="GO" id="GO:0019834">
    <property type="term" value="F:phospholipase A2 inhibitor activity"/>
    <property type="evidence" value="ECO:0007669"/>
    <property type="project" value="UniProtKB-KW"/>
</dbReference>
<dbReference type="GO" id="GO:0071385">
    <property type="term" value="P:cellular response to glucocorticoid stimulus"/>
    <property type="evidence" value="ECO:0007669"/>
    <property type="project" value="TreeGrafter"/>
</dbReference>
<dbReference type="GO" id="GO:0006909">
    <property type="term" value="P:phagocytosis"/>
    <property type="evidence" value="ECO:0007669"/>
    <property type="project" value="TreeGrafter"/>
</dbReference>
<dbReference type="GO" id="GO:0007165">
    <property type="term" value="P:signal transduction"/>
    <property type="evidence" value="ECO:0007669"/>
    <property type="project" value="TreeGrafter"/>
</dbReference>
<dbReference type="FunFam" id="1.10.220.10:FF:000001">
    <property type="entry name" value="Annexin"/>
    <property type="match status" value="1"/>
</dbReference>
<dbReference type="FunFam" id="1.10.220.10:FF:000002">
    <property type="entry name" value="Annexin"/>
    <property type="match status" value="1"/>
</dbReference>
<dbReference type="FunFam" id="1.10.220.10:FF:000003">
    <property type="entry name" value="Annexin"/>
    <property type="match status" value="1"/>
</dbReference>
<dbReference type="FunFam" id="1.10.220.10:FF:000007">
    <property type="entry name" value="Annexin"/>
    <property type="match status" value="1"/>
</dbReference>
<dbReference type="Gene3D" id="1.10.220.10">
    <property type="entry name" value="Annexin"/>
    <property type="match status" value="4"/>
</dbReference>
<dbReference type="InterPro" id="IPR001464">
    <property type="entry name" value="Annexin"/>
</dbReference>
<dbReference type="InterPro" id="IPR018502">
    <property type="entry name" value="Annexin_repeat"/>
</dbReference>
<dbReference type="InterPro" id="IPR018252">
    <property type="entry name" value="Annexin_repeat_CS"/>
</dbReference>
<dbReference type="InterPro" id="IPR037104">
    <property type="entry name" value="Annexin_sf"/>
</dbReference>
<dbReference type="InterPro" id="IPR002388">
    <property type="entry name" value="ANX1"/>
</dbReference>
<dbReference type="PANTHER" id="PTHR10502">
    <property type="entry name" value="ANNEXIN"/>
    <property type="match status" value="1"/>
</dbReference>
<dbReference type="PANTHER" id="PTHR10502:SF17">
    <property type="entry name" value="ANNEXIN A1"/>
    <property type="match status" value="1"/>
</dbReference>
<dbReference type="Pfam" id="PF00191">
    <property type="entry name" value="Annexin"/>
    <property type="match status" value="4"/>
</dbReference>
<dbReference type="PRINTS" id="PR00196">
    <property type="entry name" value="ANNEXIN"/>
</dbReference>
<dbReference type="PRINTS" id="PR00197">
    <property type="entry name" value="ANNEXINI"/>
</dbReference>
<dbReference type="SMART" id="SM00335">
    <property type="entry name" value="ANX"/>
    <property type="match status" value="4"/>
</dbReference>
<dbReference type="SUPFAM" id="SSF47874">
    <property type="entry name" value="Annexin"/>
    <property type="match status" value="1"/>
</dbReference>
<dbReference type="PROSITE" id="PS00223">
    <property type="entry name" value="ANNEXIN_1"/>
    <property type="match status" value="4"/>
</dbReference>
<dbReference type="PROSITE" id="PS51897">
    <property type="entry name" value="ANNEXIN_2"/>
    <property type="match status" value="4"/>
</dbReference>
<evidence type="ECO:0000250" key="1"/>
<evidence type="ECO:0000255" key="2">
    <source>
        <dbReference type="PROSITE-ProRule" id="PRU01245"/>
    </source>
</evidence>
<evidence type="ECO:0000269" key="3">
    <source>
    </source>
</evidence>
<evidence type="ECO:0000305" key="4"/>
<feature type="chain" id="PRO_0000067468" description="Annexin A1 isoform p37">
    <location>
        <begin position="1"/>
        <end position="343"/>
    </location>
</feature>
<feature type="repeat" description="Annexin 1" evidence="2">
    <location>
        <begin position="38"/>
        <end position="109"/>
    </location>
</feature>
<feature type="repeat" description="Annexin 2" evidence="2">
    <location>
        <begin position="110"/>
        <end position="181"/>
    </location>
</feature>
<feature type="repeat" description="Annexin 3" evidence="2">
    <location>
        <begin position="193"/>
        <end position="265"/>
    </location>
</feature>
<feature type="repeat" description="Annexin 4" evidence="2">
    <location>
        <begin position="269"/>
        <end position="340"/>
    </location>
</feature>
<feature type="modified residue" description="Phosphotyrosine; by EGFR; in vitro" evidence="3">
    <location>
        <position position="21"/>
    </location>
</feature>
<feature type="modified residue" description="Phosphoserine; by PKC; in vitro" evidence="3">
    <location>
        <position position="24"/>
    </location>
</feature>
<feature type="cross-link" description="Isoglutamyl lysine isopeptide (Gln-Lys) (interchain with K-?)" evidence="1">
    <location>
        <position position="19"/>
    </location>
</feature>
<feature type="sequence conflict" description="In Ref. 2; AAA20674." evidence="4" ref="2">
    <original>HR</original>
    <variation>QQ</variation>
    <location>
        <begin position="74"/>
        <end position="75"/>
    </location>
</feature>
<gene>
    <name type="primary">CP37</name>
</gene>